<accession>B7UJD8</accession>
<feature type="signal peptide" evidence="1">
    <location>
        <begin position="1"/>
        <end position="20"/>
    </location>
</feature>
<feature type="chain" id="PRO_0000429534" description="Fimbria adhesin EcpD">
    <location>
        <begin position="21"/>
        <end position="547"/>
    </location>
</feature>
<sequence length="547" mass="59948">MRVNLLIAMIIFALIWPATALRAAVSKTTWADAPAREFVFVENNSDDNFFVTPGGALDPRLTGANRWTGLKYNGSGTIYQQSLGYIDNGYNTGLYTNWKFDMWLENSPVSSPLTGLRCINWYAGCNMTTSLILPQTTDASGFYGATVTSGGAKWMHGMLSDAFYQYLQQMPVGSSFTMTINACQTSVNYDASSGARCKDQASGNWYVRNVTHTKAANLRLINTHSLAEVFINSDGVPTLGEGNADCRTQTIGSRSGLSCKMVNYTLQTNGLSNTSIHIFPAIANSSLASAVGAYDMQFSLNGSSWKPVSNTAYYYTFNEMKSADSIYVFFSSNFFKQMVNLGISDINTKDLFNFRFQNTTSPESGWYEFSTSNTLIIKPRDFSISIISDEYTQTPSREGYVASGESALDFGYIVTTSGKTAADEVLIKVTGPAQVIGGRSYCVFSSDDGKAKVPFPATLSFITRNGATKTYDAGCDDSWRDMTDALWLTTPWTDISGEVGQMDKTTVKFSIPMDNAISLRTVDDNGWFGEVSASGEIHVQATWRNIN</sequence>
<evidence type="ECO:0000255" key="1"/>
<evidence type="ECO:0000269" key="2">
    <source>
    </source>
</evidence>
<evidence type="ECO:0000269" key="3">
    <source>
    </source>
</evidence>
<evidence type="ECO:0000305" key="4"/>
<keyword id="KW-0281">Fimbrium</keyword>
<keyword id="KW-1185">Reference proteome</keyword>
<keyword id="KW-0732">Signal</keyword>
<reference key="1">
    <citation type="journal article" date="2009" name="J. Bacteriol.">
        <title>Complete genome sequence and comparative genome analysis of enteropathogenic Escherichia coli O127:H6 strain E2348/69.</title>
        <authorList>
            <person name="Iguchi A."/>
            <person name="Thomson N.R."/>
            <person name="Ogura Y."/>
            <person name="Saunders D."/>
            <person name="Ooka T."/>
            <person name="Henderson I.R."/>
            <person name="Harris D."/>
            <person name="Asadulghani M."/>
            <person name="Kurokawa K."/>
            <person name="Dean P."/>
            <person name="Kenny B."/>
            <person name="Quail M.A."/>
            <person name="Thurston S."/>
            <person name="Dougan G."/>
            <person name="Hayashi T."/>
            <person name="Parkhill J."/>
            <person name="Frankel G."/>
        </authorList>
    </citation>
    <scope>NUCLEOTIDE SEQUENCE [LARGE SCALE GENOMIC DNA]</scope>
    <source>
        <strain>E2348/69 / EPEC</strain>
    </source>
</reference>
<reference key="2">
    <citation type="journal article" date="2012" name="J. Bacteriol.">
        <title>Transcriptional regulation of the ecp operon by EcpR, IHF, and H-NS in attaching and effacing Escherichia coli.</title>
        <authorList>
            <person name="Martinez-Santos V.I."/>
            <person name="Medrano-Lopez A."/>
            <person name="Saldana Z."/>
            <person name="Giron J.A."/>
            <person name="Puente J.L."/>
        </authorList>
    </citation>
    <scope>INDUCTION</scope>
    <source>
        <strain>E2348/69 / EPEC</strain>
    </source>
</reference>
<reference key="3">
    <citation type="journal article" date="2012" name="Proc. Natl. Acad. Sci. U.S.A.">
        <title>Structural insights into the biogenesis and biofilm formation by the Escherichia coli common pilus.</title>
        <authorList>
            <person name="Garnett J.A."/>
            <person name="Martinez-Santos V.I."/>
            <person name="Saldana Z."/>
            <person name="Pape T."/>
            <person name="Hawthorne W."/>
            <person name="Chan J."/>
            <person name="Simpson P.J."/>
            <person name="Cota E."/>
            <person name="Puente J.L."/>
            <person name="Giron J.A."/>
            <person name="Matthews S."/>
        </authorList>
    </citation>
    <scope>FUNCTION</scope>
    <scope>SUBUNIT</scope>
    <scope>INTERACTION WITH ECPA</scope>
    <scope>SUBCELLULAR LOCATION</scope>
    <source>
        <strain>E2348/69 / EPEC</strain>
    </source>
</reference>
<proteinExistence type="evidence at protein level"/>
<dbReference type="EMBL" id="FM180568">
    <property type="protein sequence ID" value="CAS07794.1"/>
    <property type="molecule type" value="Genomic_DNA"/>
</dbReference>
<dbReference type="RefSeq" id="WP_001265644.1">
    <property type="nucleotide sequence ID" value="NC_011601.1"/>
</dbReference>
<dbReference type="KEGG" id="ecg:E2348C_0246"/>
<dbReference type="HOGENOM" id="CLU_039494_0_0_6"/>
<dbReference type="Proteomes" id="UP000008205">
    <property type="component" value="Chromosome"/>
</dbReference>
<dbReference type="GO" id="GO:0009289">
    <property type="term" value="C:pilus"/>
    <property type="evidence" value="ECO:0007669"/>
    <property type="project" value="UniProtKB-SubCell"/>
</dbReference>
<comment type="function">
    <text evidence="2">Part of the ecpRABCDE operon, which encodes the E.coli common pilus (ECP). ECP is found in both commensal and pathogenic strains and plays a dual role in early-stage biofilm development and host cell recognition. Tip pilus adhesin, which is required for assembly of EcpA into fibers.</text>
</comment>
<comment type="subunit">
    <text evidence="2">Forms polymers. Interacts with EcpA.</text>
</comment>
<comment type="subcellular location">
    <subcellularLocation>
        <location evidence="2">Fimbrium</location>
    </subcellularLocation>
    <text>Polymerized EcpD is normally incorporated within the tip of ECP, but it can also form functional fimbria independent of EcpA.</text>
</comment>
<comment type="induction">
    <text evidence="3">Negatively regulated by H-NS. Positively regulated by IHF and EcpR.</text>
</comment>
<comment type="similarity">
    <text evidence="4">Belongs to the EcpD/MatE family.</text>
</comment>
<organism>
    <name type="scientific">Escherichia coli O127:H6 (strain E2348/69 / EPEC)</name>
    <dbReference type="NCBI Taxonomy" id="574521"/>
    <lineage>
        <taxon>Bacteria</taxon>
        <taxon>Pseudomonadati</taxon>
        <taxon>Pseudomonadota</taxon>
        <taxon>Gammaproteobacteria</taxon>
        <taxon>Enterobacterales</taxon>
        <taxon>Enterobacteriaceae</taxon>
        <taxon>Escherichia</taxon>
    </lineage>
</organism>
<name>ECPD_ECO27</name>
<gene>
    <name type="primary">ecpD</name>
    <name type="ordered locus">E2348C_0246</name>
</gene>
<protein>
    <recommendedName>
        <fullName>Fimbria adhesin EcpD</fullName>
    </recommendedName>
</protein>